<reference key="1">
    <citation type="submission" date="2005-11" db="EMBL/GenBank/DDBJ databases">
        <title>The complete genome sequence of Lawsonia intracellularis: the causative agent of proliferative enteropathy.</title>
        <authorList>
            <person name="Kaur K."/>
            <person name="Zhang Q."/>
            <person name="Beckler D."/>
            <person name="Munir S."/>
            <person name="Li L."/>
            <person name="Kinsley K."/>
            <person name="Herron L."/>
            <person name="Peterson A."/>
            <person name="May B."/>
            <person name="Singh S."/>
            <person name="Gebhart C."/>
            <person name="Kapur V."/>
        </authorList>
    </citation>
    <scope>NUCLEOTIDE SEQUENCE [LARGE SCALE GENOMIC DNA]</scope>
    <source>
        <strain>PHE/MN1-00</strain>
    </source>
</reference>
<protein>
    <recommendedName>
        <fullName evidence="1">tRNA pseudouridine synthase A</fullName>
        <ecNumber evidence="1">5.4.99.12</ecNumber>
    </recommendedName>
    <alternativeName>
        <fullName evidence="1">tRNA pseudouridine(38-40) synthase</fullName>
    </alternativeName>
    <alternativeName>
        <fullName evidence="1">tRNA pseudouridylate synthase I</fullName>
    </alternativeName>
    <alternativeName>
        <fullName evidence="1">tRNA-uridine isomerase I</fullName>
    </alternativeName>
</protein>
<keyword id="KW-0413">Isomerase</keyword>
<keyword id="KW-1185">Reference proteome</keyword>
<keyword id="KW-0819">tRNA processing</keyword>
<gene>
    <name evidence="1" type="primary">truA</name>
    <name type="ordered locus">LI1062</name>
</gene>
<dbReference type="EC" id="5.4.99.12" evidence="1"/>
<dbReference type="EMBL" id="AM180252">
    <property type="protein sequence ID" value="CAJ55116.1"/>
    <property type="molecule type" value="Genomic_DNA"/>
</dbReference>
<dbReference type="RefSeq" id="WP_011527145.1">
    <property type="nucleotide sequence ID" value="NC_008011.1"/>
</dbReference>
<dbReference type="SMR" id="Q1MPG1"/>
<dbReference type="STRING" id="363253.LI1062"/>
<dbReference type="KEGG" id="lip:LI1062"/>
<dbReference type="eggNOG" id="COG0101">
    <property type="taxonomic scope" value="Bacteria"/>
</dbReference>
<dbReference type="HOGENOM" id="CLU_014673_0_1_7"/>
<dbReference type="OrthoDB" id="9811823at2"/>
<dbReference type="Proteomes" id="UP000002430">
    <property type="component" value="Chromosome"/>
</dbReference>
<dbReference type="GO" id="GO:0003723">
    <property type="term" value="F:RNA binding"/>
    <property type="evidence" value="ECO:0007669"/>
    <property type="project" value="InterPro"/>
</dbReference>
<dbReference type="GO" id="GO:0160147">
    <property type="term" value="F:tRNA pseudouridine(38-40) synthase activity"/>
    <property type="evidence" value="ECO:0007669"/>
    <property type="project" value="UniProtKB-EC"/>
</dbReference>
<dbReference type="GO" id="GO:0031119">
    <property type="term" value="P:tRNA pseudouridine synthesis"/>
    <property type="evidence" value="ECO:0007669"/>
    <property type="project" value="UniProtKB-UniRule"/>
</dbReference>
<dbReference type="CDD" id="cd02570">
    <property type="entry name" value="PseudoU_synth_EcTruA"/>
    <property type="match status" value="1"/>
</dbReference>
<dbReference type="FunFam" id="3.30.70.580:FF:000001">
    <property type="entry name" value="tRNA pseudouridine synthase A"/>
    <property type="match status" value="1"/>
</dbReference>
<dbReference type="Gene3D" id="3.30.70.660">
    <property type="entry name" value="Pseudouridine synthase I, catalytic domain, C-terminal subdomain"/>
    <property type="match status" value="1"/>
</dbReference>
<dbReference type="Gene3D" id="3.30.70.580">
    <property type="entry name" value="Pseudouridine synthase I, catalytic domain, N-terminal subdomain"/>
    <property type="match status" value="1"/>
</dbReference>
<dbReference type="HAMAP" id="MF_00171">
    <property type="entry name" value="TruA"/>
    <property type="match status" value="1"/>
</dbReference>
<dbReference type="InterPro" id="IPR020103">
    <property type="entry name" value="PsdUridine_synth_cat_dom_sf"/>
</dbReference>
<dbReference type="InterPro" id="IPR001406">
    <property type="entry name" value="PsdUridine_synth_TruA"/>
</dbReference>
<dbReference type="InterPro" id="IPR020097">
    <property type="entry name" value="PsdUridine_synth_TruA_a/b_dom"/>
</dbReference>
<dbReference type="InterPro" id="IPR020095">
    <property type="entry name" value="PsdUridine_synth_TruA_C"/>
</dbReference>
<dbReference type="InterPro" id="IPR020094">
    <property type="entry name" value="TruA/RsuA/RluB/E/F_N"/>
</dbReference>
<dbReference type="NCBIfam" id="TIGR00071">
    <property type="entry name" value="hisT_truA"/>
    <property type="match status" value="1"/>
</dbReference>
<dbReference type="PANTHER" id="PTHR11142">
    <property type="entry name" value="PSEUDOURIDYLATE SYNTHASE"/>
    <property type="match status" value="1"/>
</dbReference>
<dbReference type="PANTHER" id="PTHR11142:SF0">
    <property type="entry name" value="TRNA PSEUDOURIDINE SYNTHASE-LIKE 1"/>
    <property type="match status" value="1"/>
</dbReference>
<dbReference type="Pfam" id="PF01416">
    <property type="entry name" value="PseudoU_synth_1"/>
    <property type="match status" value="2"/>
</dbReference>
<dbReference type="PIRSF" id="PIRSF001430">
    <property type="entry name" value="tRNA_psdUrid_synth"/>
    <property type="match status" value="1"/>
</dbReference>
<dbReference type="SUPFAM" id="SSF55120">
    <property type="entry name" value="Pseudouridine synthase"/>
    <property type="match status" value="1"/>
</dbReference>
<accession>Q1MPG1</accession>
<evidence type="ECO:0000255" key="1">
    <source>
        <dbReference type="HAMAP-Rule" id="MF_00171"/>
    </source>
</evidence>
<proteinExistence type="inferred from homology"/>
<organism>
    <name type="scientific">Lawsonia intracellularis (strain PHE/MN1-00)</name>
    <dbReference type="NCBI Taxonomy" id="363253"/>
    <lineage>
        <taxon>Bacteria</taxon>
        <taxon>Pseudomonadati</taxon>
        <taxon>Thermodesulfobacteriota</taxon>
        <taxon>Desulfovibrionia</taxon>
        <taxon>Desulfovibrionales</taxon>
        <taxon>Desulfovibrionaceae</taxon>
        <taxon>Lawsonia</taxon>
    </lineage>
</organism>
<sequence>MPRLKFTLAYVGTAYHGWQTQRRKSLPELPTIQSTLEKVIASIIGKPVRVCGAGRTDAGVHAEGQVAHVDIPESKLKLDWQLVLNASLPKNIRVVHSLYVEDTFHAQHDAVQKLYAYRLWLNHRYTPPVLYPFVWSCGRLDLEAMDKASTFLLGTHNFVSLQNRGTKLLSTVRTISALYREPSQFFSLNESHEVTWFFKADGFLKQMVRNIMGLLVLVGRRKIQPEKIPYILEAKDRRHSAPTAPAHGLTLKKVFYS</sequence>
<name>TRUA_LAWIP</name>
<comment type="function">
    <text evidence="1">Formation of pseudouridine at positions 38, 39 and 40 in the anticodon stem and loop of transfer RNAs.</text>
</comment>
<comment type="catalytic activity">
    <reaction evidence="1">
        <text>uridine(38/39/40) in tRNA = pseudouridine(38/39/40) in tRNA</text>
        <dbReference type="Rhea" id="RHEA:22376"/>
        <dbReference type="Rhea" id="RHEA-COMP:10085"/>
        <dbReference type="Rhea" id="RHEA-COMP:10087"/>
        <dbReference type="ChEBI" id="CHEBI:65314"/>
        <dbReference type="ChEBI" id="CHEBI:65315"/>
        <dbReference type="EC" id="5.4.99.12"/>
    </reaction>
</comment>
<comment type="subunit">
    <text evidence="1">Homodimer.</text>
</comment>
<comment type="similarity">
    <text evidence="1">Belongs to the tRNA pseudouridine synthase TruA family.</text>
</comment>
<feature type="chain" id="PRO_1000017104" description="tRNA pseudouridine synthase A">
    <location>
        <begin position="1"/>
        <end position="257"/>
    </location>
</feature>
<feature type="active site" description="Nucleophile" evidence="1">
    <location>
        <position position="57"/>
    </location>
</feature>
<feature type="binding site" evidence="1">
    <location>
        <position position="115"/>
    </location>
    <ligand>
        <name>substrate</name>
    </ligand>
</feature>